<name>RL21_MYCPA</name>
<gene>
    <name evidence="1" type="primary">rplU</name>
    <name type="ordered locus">MAP_2266c</name>
</gene>
<feature type="chain" id="PRO_0000270686" description="Large ribosomal subunit protein bL21">
    <location>
        <begin position="1"/>
        <end position="103"/>
    </location>
</feature>
<evidence type="ECO:0000255" key="1">
    <source>
        <dbReference type="HAMAP-Rule" id="MF_01363"/>
    </source>
</evidence>
<evidence type="ECO:0000305" key="2"/>
<reference key="1">
    <citation type="journal article" date="2005" name="Proc. Natl. Acad. Sci. U.S.A.">
        <title>The complete genome sequence of Mycobacterium avium subspecies paratuberculosis.</title>
        <authorList>
            <person name="Li L."/>
            <person name="Bannantine J.P."/>
            <person name="Zhang Q."/>
            <person name="Amonsin A."/>
            <person name="May B.J."/>
            <person name="Alt D."/>
            <person name="Banerji N."/>
            <person name="Kanjilal S."/>
            <person name="Kapur V."/>
        </authorList>
    </citation>
    <scope>NUCLEOTIDE SEQUENCE [LARGE SCALE GENOMIC DNA]</scope>
    <source>
        <strain>ATCC BAA-968 / K-10</strain>
    </source>
</reference>
<proteinExistence type="inferred from homology"/>
<accession>Q73XP3</accession>
<dbReference type="EMBL" id="AE016958">
    <property type="protein sequence ID" value="AAS04583.1"/>
    <property type="molecule type" value="Genomic_DNA"/>
</dbReference>
<dbReference type="RefSeq" id="WP_003875862.1">
    <property type="nucleotide sequence ID" value="NZ_CP106873.1"/>
</dbReference>
<dbReference type="SMR" id="Q73XP3"/>
<dbReference type="STRING" id="262316.MAP_2266c"/>
<dbReference type="GeneID" id="75269504"/>
<dbReference type="KEGG" id="mpa:MAP_2266c"/>
<dbReference type="eggNOG" id="COG0261">
    <property type="taxonomic scope" value="Bacteria"/>
</dbReference>
<dbReference type="HOGENOM" id="CLU_061463_3_0_11"/>
<dbReference type="Proteomes" id="UP000000580">
    <property type="component" value="Chromosome"/>
</dbReference>
<dbReference type="GO" id="GO:0005737">
    <property type="term" value="C:cytoplasm"/>
    <property type="evidence" value="ECO:0007669"/>
    <property type="project" value="UniProtKB-ARBA"/>
</dbReference>
<dbReference type="GO" id="GO:1990904">
    <property type="term" value="C:ribonucleoprotein complex"/>
    <property type="evidence" value="ECO:0007669"/>
    <property type="project" value="UniProtKB-KW"/>
</dbReference>
<dbReference type="GO" id="GO:0005840">
    <property type="term" value="C:ribosome"/>
    <property type="evidence" value="ECO:0007669"/>
    <property type="project" value="UniProtKB-KW"/>
</dbReference>
<dbReference type="GO" id="GO:0019843">
    <property type="term" value="F:rRNA binding"/>
    <property type="evidence" value="ECO:0007669"/>
    <property type="project" value="UniProtKB-UniRule"/>
</dbReference>
<dbReference type="GO" id="GO:0003735">
    <property type="term" value="F:structural constituent of ribosome"/>
    <property type="evidence" value="ECO:0007669"/>
    <property type="project" value="InterPro"/>
</dbReference>
<dbReference type="GO" id="GO:0006412">
    <property type="term" value="P:translation"/>
    <property type="evidence" value="ECO:0007669"/>
    <property type="project" value="UniProtKB-UniRule"/>
</dbReference>
<dbReference type="HAMAP" id="MF_01363">
    <property type="entry name" value="Ribosomal_bL21"/>
    <property type="match status" value="1"/>
</dbReference>
<dbReference type="InterPro" id="IPR028909">
    <property type="entry name" value="bL21-like"/>
</dbReference>
<dbReference type="InterPro" id="IPR036164">
    <property type="entry name" value="bL21-like_sf"/>
</dbReference>
<dbReference type="InterPro" id="IPR001787">
    <property type="entry name" value="Ribosomal_bL21"/>
</dbReference>
<dbReference type="InterPro" id="IPR018258">
    <property type="entry name" value="Ribosomal_bL21_CS"/>
</dbReference>
<dbReference type="NCBIfam" id="TIGR00061">
    <property type="entry name" value="L21"/>
    <property type="match status" value="1"/>
</dbReference>
<dbReference type="PANTHER" id="PTHR21349">
    <property type="entry name" value="50S RIBOSOMAL PROTEIN L21"/>
    <property type="match status" value="1"/>
</dbReference>
<dbReference type="PANTHER" id="PTHR21349:SF0">
    <property type="entry name" value="LARGE RIBOSOMAL SUBUNIT PROTEIN BL21M"/>
    <property type="match status" value="1"/>
</dbReference>
<dbReference type="Pfam" id="PF00829">
    <property type="entry name" value="Ribosomal_L21p"/>
    <property type="match status" value="1"/>
</dbReference>
<dbReference type="SUPFAM" id="SSF141091">
    <property type="entry name" value="L21p-like"/>
    <property type="match status" value="1"/>
</dbReference>
<dbReference type="PROSITE" id="PS01169">
    <property type="entry name" value="RIBOSOMAL_L21"/>
    <property type="match status" value="1"/>
</dbReference>
<keyword id="KW-1185">Reference proteome</keyword>
<keyword id="KW-0687">Ribonucleoprotein</keyword>
<keyword id="KW-0689">Ribosomal protein</keyword>
<keyword id="KW-0694">RNA-binding</keyword>
<keyword id="KW-0699">rRNA-binding</keyword>
<protein>
    <recommendedName>
        <fullName evidence="1">Large ribosomal subunit protein bL21</fullName>
    </recommendedName>
    <alternativeName>
        <fullName evidence="2">50S ribosomal protein L21</fullName>
    </alternativeName>
</protein>
<organism>
    <name type="scientific">Mycolicibacterium paratuberculosis (strain ATCC BAA-968 / K-10)</name>
    <name type="common">Mycobacterium paratuberculosis</name>
    <dbReference type="NCBI Taxonomy" id="262316"/>
    <lineage>
        <taxon>Bacteria</taxon>
        <taxon>Bacillati</taxon>
        <taxon>Actinomycetota</taxon>
        <taxon>Actinomycetes</taxon>
        <taxon>Mycobacteriales</taxon>
        <taxon>Mycobacteriaceae</taxon>
        <taxon>Mycobacterium</taxon>
        <taxon>Mycobacterium avium complex (MAC)</taxon>
    </lineage>
</organism>
<comment type="function">
    <text evidence="1">This protein binds to 23S rRNA in the presence of protein L20.</text>
</comment>
<comment type="subunit">
    <text evidence="1">Part of the 50S ribosomal subunit. Contacts protein L20.</text>
</comment>
<comment type="similarity">
    <text evidence="1">Belongs to the bacterial ribosomal protein bL21 family.</text>
</comment>
<sequence>MATYAIVKTGGKQYKVAVGDVVKVEKLDSEPGSNVSLPVALVVDGAKVTSDAAALAKVAVTGEVLEHTKGPKIRIHKFRNKTGYHKRQGHRQQLTVLKVTGIK</sequence>